<gene>
    <name evidence="1" type="primary">rpmC</name>
    <name type="ordered locus">BbuZS7_0497</name>
</gene>
<proteinExistence type="inferred from homology"/>
<name>RL29_BORBZ</name>
<evidence type="ECO:0000255" key="1">
    <source>
        <dbReference type="HAMAP-Rule" id="MF_00374"/>
    </source>
</evidence>
<evidence type="ECO:0000305" key="2"/>
<comment type="similarity">
    <text evidence="1">Belongs to the universal ribosomal protein uL29 family.</text>
</comment>
<dbReference type="EMBL" id="CP001205">
    <property type="protein sequence ID" value="ACK74830.1"/>
    <property type="molecule type" value="Genomic_DNA"/>
</dbReference>
<dbReference type="RefSeq" id="WP_002557077.1">
    <property type="nucleotide sequence ID" value="NC_011728.1"/>
</dbReference>
<dbReference type="SMR" id="B7J251"/>
<dbReference type="GeneID" id="83865961"/>
<dbReference type="KEGG" id="bbz:BbuZS7_0497"/>
<dbReference type="HOGENOM" id="CLU_158491_5_0_12"/>
<dbReference type="Proteomes" id="UP000006901">
    <property type="component" value="Chromosome"/>
</dbReference>
<dbReference type="GO" id="GO:1990904">
    <property type="term" value="C:ribonucleoprotein complex"/>
    <property type="evidence" value="ECO:0007669"/>
    <property type="project" value="UniProtKB-KW"/>
</dbReference>
<dbReference type="GO" id="GO:0005840">
    <property type="term" value="C:ribosome"/>
    <property type="evidence" value="ECO:0007669"/>
    <property type="project" value="UniProtKB-KW"/>
</dbReference>
<dbReference type="GO" id="GO:0003735">
    <property type="term" value="F:structural constituent of ribosome"/>
    <property type="evidence" value="ECO:0007669"/>
    <property type="project" value="InterPro"/>
</dbReference>
<dbReference type="GO" id="GO:0006412">
    <property type="term" value="P:translation"/>
    <property type="evidence" value="ECO:0007669"/>
    <property type="project" value="UniProtKB-UniRule"/>
</dbReference>
<dbReference type="CDD" id="cd00427">
    <property type="entry name" value="Ribosomal_L29_HIP"/>
    <property type="match status" value="1"/>
</dbReference>
<dbReference type="Gene3D" id="1.10.287.310">
    <property type="match status" value="1"/>
</dbReference>
<dbReference type="HAMAP" id="MF_00374">
    <property type="entry name" value="Ribosomal_uL29"/>
    <property type="match status" value="1"/>
</dbReference>
<dbReference type="InterPro" id="IPR001854">
    <property type="entry name" value="Ribosomal_uL29"/>
</dbReference>
<dbReference type="InterPro" id="IPR036049">
    <property type="entry name" value="Ribosomal_uL29_sf"/>
</dbReference>
<dbReference type="NCBIfam" id="TIGR00012">
    <property type="entry name" value="L29"/>
    <property type="match status" value="1"/>
</dbReference>
<dbReference type="Pfam" id="PF00831">
    <property type="entry name" value="Ribosomal_L29"/>
    <property type="match status" value="1"/>
</dbReference>
<dbReference type="SUPFAM" id="SSF46561">
    <property type="entry name" value="Ribosomal protein L29 (L29p)"/>
    <property type="match status" value="1"/>
</dbReference>
<sequence length="66" mass="8011">MLKNFKNFTLEDMKAKRLELKKEYLDLRFKSVVGHVENPLKKREIRRDIARLNTMICEYELGIRKV</sequence>
<feature type="chain" id="PRO_1000121733" description="Large ribosomal subunit protein uL29">
    <location>
        <begin position="1"/>
        <end position="66"/>
    </location>
</feature>
<accession>B7J251</accession>
<keyword id="KW-0687">Ribonucleoprotein</keyword>
<keyword id="KW-0689">Ribosomal protein</keyword>
<organism>
    <name type="scientific">Borreliella burgdorferi (strain ZS7)</name>
    <name type="common">Borrelia burgdorferi</name>
    <dbReference type="NCBI Taxonomy" id="445985"/>
    <lineage>
        <taxon>Bacteria</taxon>
        <taxon>Pseudomonadati</taxon>
        <taxon>Spirochaetota</taxon>
        <taxon>Spirochaetia</taxon>
        <taxon>Spirochaetales</taxon>
        <taxon>Borreliaceae</taxon>
        <taxon>Borreliella</taxon>
    </lineage>
</organism>
<protein>
    <recommendedName>
        <fullName evidence="1">Large ribosomal subunit protein uL29</fullName>
    </recommendedName>
    <alternativeName>
        <fullName evidence="2">50S ribosomal protein L29</fullName>
    </alternativeName>
</protein>
<reference key="1">
    <citation type="journal article" date="2011" name="J. Bacteriol.">
        <title>Whole-genome sequences of thirteen isolates of Borrelia burgdorferi.</title>
        <authorList>
            <person name="Schutzer S.E."/>
            <person name="Fraser-Liggett C.M."/>
            <person name="Casjens S.R."/>
            <person name="Qiu W.G."/>
            <person name="Dunn J.J."/>
            <person name="Mongodin E.F."/>
            <person name="Luft B.J."/>
        </authorList>
    </citation>
    <scope>NUCLEOTIDE SEQUENCE [LARGE SCALE GENOMIC DNA]</scope>
    <source>
        <strain>ZS7</strain>
    </source>
</reference>